<reference key="1">
    <citation type="journal article" date="2004" name="Proc. Natl. Acad. Sci. U.S.A.">
        <title>Insights into the evolution of Yersinia pestis through whole-genome comparison with Yersinia pseudotuberculosis.</title>
        <authorList>
            <person name="Chain P.S.G."/>
            <person name="Carniel E."/>
            <person name="Larimer F.W."/>
            <person name="Lamerdin J."/>
            <person name="Stoutland P.O."/>
            <person name="Regala W.M."/>
            <person name="Georgescu A.M."/>
            <person name="Vergez L.M."/>
            <person name="Land M.L."/>
            <person name="Motin V.L."/>
            <person name="Brubaker R.R."/>
            <person name="Fowler J."/>
            <person name="Hinnebusch J."/>
            <person name="Marceau M."/>
            <person name="Medigue C."/>
            <person name="Simonet M."/>
            <person name="Chenal-Francisque V."/>
            <person name="Souza B."/>
            <person name="Dacheux D."/>
            <person name="Elliott J.M."/>
            <person name="Derbise A."/>
            <person name="Hauser L.J."/>
            <person name="Garcia E."/>
        </authorList>
    </citation>
    <scope>NUCLEOTIDE SEQUENCE [LARGE SCALE GENOMIC DNA]</scope>
    <source>
        <strain>IP32953</strain>
    </source>
</reference>
<comment type="function">
    <text evidence="1">Activator of cell division through the inhibition of FtsZ GTPase activity, therefore promoting FtsZ assembly into bundles of protofilaments necessary for the formation of the division Z ring. It is recruited early at mid-cell but it is not essential for cell division.</text>
</comment>
<comment type="subunit">
    <text evidence="1">Homodimer. Interacts with FtsZ.</text>
</comment>
<comment type="subcellular location">
    <subcellularLocation>
        <location evidence="1">Cytoplasm</location>
    </subcellularLocation>
    <text evidence="1">Localizes at mid-cell.</text>
</comment>
<comment type="similarity">
    <text evidence="1">Belongs to the ZapA family. Type 1 subfamily.</text>
</comment>
<dbReference type="EMBL" id="BX936398">
    <property type="protein sequence ID" value="CAH22425.1"/>
    <property type="molecule type" value="Genomic_DNA"/>
</dbReference>
<dbReference type="RefSeq" id="WP_002209954.1">
    <property type="nucleotide sequence ID" value="NZ_CP009712.1"/>
</dbReference>
<dbReference type="SMR" id="Q666R0"/>
<dbReference type="GeneID" id="96662508"/>
<dbReference type="KEGG" id="ypo:BZ17_3424"/>
<dbReference type="KEGG" id="yps:YPTB3187"/>
<dbReference type="PATRIC" id="fig|273123.14.peg.3593"/>
<dbReference type="Proteomes" id="UP000001011">
    <property type="component" value="Chromosome"/>
</dbReference>
<dbReference type="GO" id="GO:0032153">
    <property type="term" value="C:cell division site"/>
    <property type="evidence" value="ECO:0007669"/>
    <property type="project" value="TreeGrafter"/>
</dbReference>
<dbReference type="GO" id="GO:0030428">
    <property type="term" value="C:cell septum"/>
    <property type="evidence" value="ECO:0007669"/>
    <property type="project" value="TreeGrafter"/>
</dbReference>
<dbReference type="GO" id="GO:0005829">
    <property type="term" value="C:cytosol"/>
    <property type="evidence" value="ECO:0007669"/>
    <property type="project" value="TreeGrafter"/>
</dbReference>
<dbReference type="GO" id="GO:0005886">
    <property type="term" value="C:plasma membrane"/>
    <property type="evidence" value="ECO:0007669"/>
    <property type="project" value="UniProtKB-UniRule"/>
</dbReference>
<dbReference type="GO" id="GO:0000917">
    <property type="term" value="P:division septum assembly"/>
    <property type="evidence" value="ECO:0007669"/>
    <property type="project" value="UniProtKB-KW"/>
</dbReference>
<dbReference type="GO" id="GO:0043093">
    <property type="term" value="P:FtsZ-dependent cytokinesis"/>
    <property type="evidence" value="ECO:0007669"/>
    <property type="project" value="TreeGrafter"/>
</dbReference>
<dbReference type="GO" id="GO:0000921">
    <property type="term" value="P:septin ring assembly"/>
    <property type="evidence" value="ECO:0007669"/>
    <property type="project" value="TreeGrafter"/>
</dbReference>
<dbReference type="FunFam" id="1.20.5.50:FF:000001">
    <property type="entry name" value="Cell division protein ZapA"/>
    <property type="match status" value="1"/>
</dbReference>
<dbReference type="FunFam" id="3.30.160.880:FF:000001">
    <property type="entry name" value="Cell division protein ZapA"/>
    <property type="match status" value="1"/>
</dbReference>
<dbReference type="Gene3D" id="1.20.5.50">
    <property type="match status" value="1"/>
</dbReference>
<dbReference type="Gene3D" id="3.30.160.880">
    <property type="entry name" value="Cell division protein ZapA protomer, N-terminal domain"/>
    <property type="match status" value="1"/>
</dbReference>
<dbReference type="HAMAP" id="MF_02012">
    <property type="entry name" value="ZapA_type1"/>
    <property type="match status" value="1"/>
</dbReference>
<dbReference type="InterPro" id="IPR007838">
    <property type="entry name" value="Cell_div_ZapA-like"/>
</dbReference>
<dbReference type="InterPro" id="IPR036192">
    <property type="entry name" value="Cell_div_ZapA-like_sf"/>
</dbReference>
<dbReference type="InterPro" id="IPR023771">
    <property type="entry name" value="Cell_div_ZapA_eubact"/>
</dbReference>
<dbReference type="InterPro" id="IPR042233">
    <property type="entry name" value="Cell_div_ZapA_N"/>
</dbReference>
<dbReference type="NCBIfam" id="NF008209">
    <property type="entry name" value="PRK10972.1"/>
    <property type="match status" value="1"/>
</dbReference>
<dbReference type="PANTHER" id="PTHR34981">
    <property type="entry name" value="CELL DIVISION PROTEIN ZAPA"/>
    <property type="match status" value="1"/>
</dbReference>
<dbReference type="PANTHER" id="PTHR34981:SF1">
    <property type="entry name" value="CELL DIVISION PROTEIN ZAPA"/>
    <property type="match status" value="1"/>
</dbReference>
<dbReference type="Pfam" id="PF05164">
    <property type="entry name" value="ZapA"/>
    <property type="match status" value="1"/>
</dbReference>
<dbReference type="SUPFAM" id="SSF102829">
    <property type="entry name" value="Cell division protein ZapA-like"/>
    <property type="match status" value="1"/>
</dbReference>
<gene>
    <name evidence="1" type="primary">zapA</name>
    <name type="ordered locus">YPTB3187</name>
</gene>
<sequence>MSAQPVDIQVFGRSLRVNCPPEQQDALNMAAEDLSQRLQDLKVRTRVNNTEQLVFIAALNVCHELAQERLKTRDYASNMEQRIRMLQQTIEQALLEQGRISDRQDTQFE</sequence>
<keyword id="KW-0131">Cell cycle</keyword>
<keyword id="KW-0132">Cell division</keyword>
<keyword id="KW-0175">Coiled coil</keyword>
<keyword id="KW-0963">Cytoplasm</keyword>
<keyword id="KW-0717">Septation</keyword>
<protein>
    <recommendedName>
        <fullName evidence="1">Cell division protein ZapA</fullName>
    </recommendedName>
    <alternativeName>
        <fullName evidence="1">Z ring-associated protein ZapA</fullName>
    </alternativeName>
</protein>
<feature type="chain" id="PRO_0000345670" description="Cell division protein ZapA">
    <location>
        <begin position="1"/>
        <end position="109"/>
    </location>
</feature>
<feature type="coiled-coil region" evidence="1">
    <location>
        <begin position="22"/>
        <end position="99"/>
    </location>
</feature>
<accession>Q666R0</accession>
<name>ZAPA_YERPS</name>
<proteinExistence type="inferred from homology"/>
<organism>
    <name type="scientific">Yersinia pseudotuberculosis serotype I (strain IP32953)</name>
    <dbReference type="NCBI Taxonomy" id="273123"/>
    <lineage>
        <taxon>Bacteria</taxon>
        <taxon>Pseudomonadati</taxon>
        <taxon>Pseudomonadota</taxon>
        <taxon>Gammaproteobacteria</taxon>
        <taxon>Enterobacterales</taxon>
        <taxon>Yersiniaceae</taxon>
        <taxon>Yersinia</taxon>
    </lineage>
</organism>
<evidence type="ECO:0000255" key="1">
    <source>
        <dbReference type="HAMAP-Rule" id="MF_02012"/>
    </source>
</evidence>